<sequence length="478" mass="54561">MALAPHSNFLANHETIKYYVGSKLPGHKRFSWGWEDYFGSIVVAKICSSRRIPRYFRKSPRICCGLDSRGLQLFSHGKHNLSPAHSINQNVPKGNSGCKFPKDVALMVWEKWGQFAKTAIVAIFILSVASKADAVDALKTCTCLLKECRLELAKCISNPACAANVACLQTCNNRPDETECQIKCGDLFENSVVDEFNECAVSRKKCVPRKSDVGDFPVPDPSVLVQKFDMKDFSGKWFITRGLNPTFDAFDCQLHEFHTEENKLVGNLSWRIRTPDGGFFTRSAVQKFVQDPKYPGILYNHDNEYLLYQDDWYILSSKVENSPEDYIFVYYKGRNDAWDGYGGSVLYTRSAVLPESIIPELQTAAQKVGRDFNTFIKTDNTCGPEPPLVERLEKKVEEGERTIIKEVEEIEEEVEKVRDKEVTLFSKLFEGFKELQRDEENFLRELSKEEMDVLDGLKMEATEVEKLFGRALPIRKLR</sequence>
<proteinExistence type="evidence at transcript level"/>
<protein>
    <recommendedName>
        <fullName>Violaxanthin de-epoxidase, chloroplastic</fullName>
        <ecNumber>1.23.5.1</ecNumber>
    </recommendedName>
</protein>
<keyword id="KW-0150">Chloroplast</keyword>
<keyword id="KW-0175">Coiled coil</keyword>
<keyword id="KW-0472">Membrane</keyword>
<keyword id="KW-0560">Oxidoreductase</keyword>
<keyword id="KW-0934">Plastid</keyword>
<keyword id="KW-1185">Reference proteome</keyword>
<keyword id="KW-0793">Thylakoid</keyword>
<keyword id="KW-0809">Transit peptide</keyword>
<gene>
    <name type="primary">VDE1</name>
    <name type="synonym">TVDE1</name>
</gene>
<reference key="1">
    <citation type="journal article" date="1998" name="J. Biol. Chem.">
        <title>Xanthophyll cycle enzymes are members of the lipocalin family, the first identified from plants.</title>
        <authorList>
            <person name="Bugos R.C."/>
            <person name="Hieber A.D."/>
            <person name="Yamamoto H.Y."/>
        </authorList>
    </citation>
    <scope>NUCLEOTIDE SEQUENCE [MRNA]</scope>
    <source>
        <strain>cv. Xanthi</strain>
        <tissue>Leaf</tissue>
    </source>
</reference>
<reference key="2">
    <citation type="journal article" date="2003" name="Physiol. Plantarum">
        <title>Chemical and mutational modification of histidines in violaxanthinde-epoxidase from Spinacia oleracea.</title>
        <authorList>
            <person name="Emanuelsson A.K."/>
            <person name="Eskling M."/>
            <person name="Aakerlund H.-E."/>
        </authorList>
    </citation>
    <scope>NUCLEOTIDE SEQUENCE [MRNA]</scope>
</reference>
<reference key="3">
    <citation type="journal article" date="1999" name="Plant Physiol.">
        <title>Developmental expression of violaxanthin de-epoxidase in leaves of tobacco growing under high and low light.</title>
        <authorList>
            <person name="Bugos R.C."/>
            <person name="Chang S.-H."/>
            <person name="Yamamoto H.Y."/>
        </authorList>
    </citation>
    <scope>DEVELOPMENTAL STAGE</scope>
</reference>
<organism>
    <name type="scientific">Nicotiana tabacum</name>
    <name type="common">Common tobacco</name>
    <dbReference type="NCBI Taxonomy" id="4097"/>
    <lineage>
        <taxon>Eukaryota</taxon>
        <taxon>Viridiplantae</taxon>
        <taxon>Streptophyta</taxon>
        <taxon>Embryophyta</taxon>
        <taxon>Tracheophyta</taxon>
        <taxon>Spermatophyta</taxon>
        <taxon>Magnoliopsida</taxon>
        <taxon>eudicotyledons</taxon>
        <taxon>Gunneridae</taxon>
        <taxon>Pentapetalae</taxon>
        <taxon>asterids</taxon>
        <taxon>lamiids</taxon>
        <taxon>Solanales</taxon>
        <taxon>Solanaceae</taxon>
        <taxon>Nicotianoideae</taxon>
        <taxon>Nicotianeae</taxon>
        <taxon>Nicotiana</taxon>
    </lineage>
</organism>
<dbReference type="EC" id="1.23.5.1"/>
<dbReference type="EMBL" id="U34817">
    <property type="protein sequence ID" value="AAC50031.1"/>
    <property type="molecule type" value="mRNA"/>
</dbReference>
<dbReference type="PIR" id="T03750">
    <property type="entry name" value="T03750"/>
</dbReference>
<dbReference type="RefSeq" id="NP_001311734.1">
    <property type="nucleotide sequence ID" value="NM_001324805.1"/>
</dbReference>
<dbReference type="SMR" id="Q40593"/>
<dbReference type="STRING" id="4097.Q40593"/>
<dbReference type="PaxDb" id="4097-Q40593"/>
<dbReference type="GeneID" id="107763628"/>
<dbReference type="KEGG" id="ag:AAC50031"/>
<dbReference type="KEGG" id="nta:107763628"/>
<dbReference type="OrthoDB" id="10258187at2759"/>
<dbReference type="BioCyc" id="MetaCyc:MONOMER-16627"/>
<dbReference type="BRENDA" id="1.23.5.1">
    <property type="organism ID" value="3645"/>
</dbReference>
<dbReference type="Proteomes" id="UP000084051">
    <property type="component" value="Unplaced"/>
</dbReference>
<dbReference type="GO" id="GO:0009535">
    <property type="term" value="C:chloroplast thylakoid membrane"/>
    <property type="evidence" value="ECO:0007669"/>
    <property type="project" value="UniProtKB-SubCell"/>
</dbReference>
<dbReference type="GO" id="GO:0046422">
    <property type="term" value="F:violaxanthin de-epoxidase activity"/>
    <property type="evidence" value="ECO:0000318"/>
    <property type="project" value="GO_Central"/>
</dbReference>
<dbReference type="GO" id="GO:0015994">
    <property type="term" value="P:chlorophyll metabolic process"/>
    <property type="evidence" value="ECO:0000318"/>
    <property type="project" value="GO_Central"/>
</dbReference>
<dbReference type="GO" id="GO:0010028">
    <property type="term" value="P:xanthophyll cycle"/>
    <property type="evidence" value="ECO:0000318"/>
    <property type="project" value="GO_Central"/>
</dbReference>
<dbReference type="CDD" id="cd19420">
    <property type="entry name" value="lipocalin_VDE"/>
    <property type="match status" value="1"/>
</dbReference>
<dbReference type="Gene3D" id="2.40.128.20">
    <property type="match status" value="1"/>
</dbReference>
<dbReference type="InterPro" id="IPR012674">
    <property type="entry name" value="Calycin"/>
</dbReference>
<dbReference type="InterPro" id="IPR022272">
    <property type="entry name" value="Lipocalin_CS"/>
</dbReference>
<dbReference type="InterPro" id="IPR044682">
    <property type="entry name" value="VDE"/>
</dbReference>
<dbReference type="InterPro" id="IPR010788">
    <property type="entry name" value="VDE_dom"/>
</dbReference>
<dbReference type="PANTHER" id="PTHR33970:SF1">
    <property type="entry name" value="VIOLAXANTHIN DE-EPOXIDASE, CHLOROPLASTIC"/>
    <property type="match status" value="1"/>
</dbReference>
<dbReference type="PANTHER" id="PTHR33970">
    <property type="entry name" value="VIOLAXANTHIN DE-EPOXIDASE, CHLOROPLASTIC-RELATED"/>
    <property type="match status" value="1"/>
</dbReference>
<dbReference type="Pfam" id="PF07137">
    <property type="entry name" value="VDE"/>
    <property type="match status" value="1"/>
</dbReference>
<dbReference type="SUPFAM" id="SSF50814">
    <property type="entry name" value="Lipocalins"/>
    <property type="match status" value="1"/>
</dbReference>
<dbReference type="PROSITE" id="PS00213">
    <property type="entry name" value="LIPOCALIN"/>
    <property type="match status" value="1"/>
</dbReference>
<evidence type="ECO:0000250" key="1"/>
<evidence type="ECO:0000255" key="2"/>
<evidence type="ECO:0000269" key="3">
    <source>
    </source>
</evidence>
<evidence type="ECO:0000305" key="4"/>
<accession>Q40593</accession>
<comment type="function">
    <text>Part of the xanthophyll (or violaxanthin) cycle for controlling the concentration of zeaxanthin in chloroplasts. Catalyzes the two-step mono de-epoxidation reaction. Stereospecific for all-trans xanthophylls. Zeaxanthin induces the dissipation of excitation energy in the chlorophyll of the light-harvesting protein complex of photosystem II.</text>
</comment>
<comment type="catalytic activity">
    <reaction>
        <text>all-trans-violaxanthin + 2 L-ascorbate = all-trans-zeaxanthin + 2 L-dehydroascorbate + 2 H2O</text>
        <dbReference type="Rhea" id="RHEA:32371"/>
        <dbReference type="ChEBI" id="CHEBI:15377"/>
        <dbReference type="ChEBI" id="CHEBI:27547"/>
        <dbReference type="ChEBI" id="CHEBI:35288"/>
        <dbReference type="ChEBI" id="CHEBI:38290"/>
        <dbReference type="ChEBI" id="CHEBI:58539"/>
        <dbReference type="EC" id="1.23.5.1"/>
    </reaction>
</comment>
<comment type="subcellular location">
    <subcellularLocation>
        <location evidence="1">Plastid</location>
        <location evidence="1">Chloroplast thylakoid membrane</location>
        <topology evidence="1">Peripheral membrane protein</topology>
        <orientation evidence="1">Lumenal side</orientation>
    </subcellularLocation>
</comment>
<comment type="developmental stage">
    <text evidence="3">Low expression in young leaves, but high expression in older leaves.</text>
</comment>
<comment type="similarity">
    <text evidence="4">Belongs to the calycin superfamily. Lipocalin family.</text>
</comment>
<name>VDE_TOBAC</name>
<feature type="transit peptide" description="Chloroplast" evidence="2">
    <location>
        <begin position="1"/>
        <end status="unknown"/>
    </location>
</feature>
<feature type="transit peptide" description="Thylakoid">
    <location>
        <begin status="unknown"/>
        <end position="134"/>
    </location>
</feature>
<feature type="chain" id="PRO_5000144729" description="Violaxanthin de-epoxidase, chloroplastic">
    <location>
        <begin position="135"/>
        <end position="478"/>
    </location>
</feature>
<feature type="coiled-coil region" evidence="2">
    <location>
        <begin position="388"/>
        <end position="453"/>
    </location>
</feature>
<feature type="sequence conflict" description="In Ref. 2." evidence="4" ref="2">
    <original>L</original>
    <variation>H</variation>
    <location>
        <position position="307"/>
    </location>
</feature>